<dbReference type="EMBL" id="CP000020">
    <property type="protein sequence ID" value="AAW86199.1"/>
    <property type="molecule type" value="Genomic_DNA"/>
</dbReference>
<dbReference type="RefSeq" id="WP_005420042.1">
    <property type="nucleotide sequence ID" value="NC_006840.2"/>
</dbReference>
<dbReference type="RefSeq" id="YP_205087.1">
    <property type="nucleotide sequence ID" value="NC_006840.2"/>
</dbReference>
<dbReference type="SMR" id="Q5E447"/>
<dbReference type="STRING" id="312309.VF_1704"/>
<dbReference type="EnsemblBacteria" id="AAW86199">
    <property type="protein sequence ID" value="AAW86199"/>
    <property type="gene ID" value="VF_1704"/>
</dbReference>
<dbReference type="GeneID" id="54164399"/>
<dbReference type="KEGG" id="vfi:VF_1704"/>
<dbReference type="PATRIC" id="fig|312309.11.peg.1726"/>
<dbReference type="eggNOG" id="COG0850">
    <property type="taxonomic scope" value="Bacteria"/>
</dbReference>
<dbReference type="HOGENOM" id="CLU_067812_0_1_6"/>
<dbReference type="OrthoDB" id="9794530at2"/>
<dbReference type="Proteomes" id="UP000000537">
    <property type="component" value="Chromosome I"/>
</dbReference>
<dbReference type="GO" id="GO:0000902">
    <property type="term" value="P:cell morphogenesis"/>
    <property type="evidence" value="ECO:0007669"/>
    <property type="project" value="InterPro"/>
</dbReference>
<dbReference type="GO" id="GO:0000917">
    <property type="term" value="P:division septum assembly"/>
    <property type="evidence" value="ECO:0007669"/>
    <property type="project" value="UniProtKB-KW"/>
</dbReference>
<dbReference type="GO" id="GO:0051302">
    <property type="term" value="P:regulation of cell division"/>
    <property type="evidence" value="ECO:0007669"/>
    <property type="project" value="InterPro"/>
</dbReference>
<dbReference type="GO" id="GO:1901891">
    <property type="term" value="P:regulation of cell septum assembly"/>
    <property type="evidence" value="ECO:0007669"/>
    <property type="project" value="InterPro"/>
</dbReference>
<dbReference type="Gene3D" id="2.160.20.70">
    <property type="match status" value="1"/>
</dbReference>
<dbReference type="Gene3D" id="3.30.70.260">
    <property type="match status" value="1"/>
</dbReference>
<dbReference type="HAMAP" id="MF_00267">
    <property type="entry name" value="MinC"/>
    <property type="match status" value="1"/>
</dbReference>
<dbReference type="InterPro" id="IPR016098">
    <property type="entry name" value="CAP/MinC_C"/>
</dbReference>
<dbReference type="InterPro" id="IPR013033">
    <property type="entry name" value="MinC"/>
</dbReference>
<dbReference type="InterPro" id="IPR036145">
    <property type="entry name" value="MinC_C_sf"/>
</dbReference>
<dbReference type="InterPro" id="IPR007874">
    <property type="entry name" value="MinC_N"/>
</dbReference>
<dbReference type="InterPro" id="IPR005526">
    <property type="entry name" value="Septum_form_inhib_MinC_C"/>
</dbReference>
<dbReference type="NCBIfam" id="TIGR01222">
    <property type="entry name" value="minC"/>
    <property type="match status" value="1"/>
</dbReference>
<dbReference type="PANTHER" id="PTHR34108">
    <property type="entry name" value="SEPTUM SITE-DETERMINING PROTEIN MINC"/>
    <property type="match status" value="1"/>
</dbReference>
<dbReference type="PANTHER" id="PTHR34108:SF1">
    <property type="entry name" value="SEPTUM SITE-DETERMINING PROTEIN MINC"/>
    <property type="match status" value="1"/>
</dbReference>
<dbReference type="Pfam" id="PF03775">
    <property type="entry name" value="MinC_C"/>
    <property type="match status" value="1"/>
</dbReference>
<dbReference type="Pfam" id="PF05209">
    <property type="entry name" value="MinC_N"/>
    <property type="match status" value="1"/>
</dbReference>
<dbReference type="SUPFAM" id="SSF63848">
    <property type="entry name" value="Cell-division inhibitor MinC, C-terminal domain"/>
    <property type="match status" value="1"/>
</dbReference>
<protein>
    <recommendedName>
        <fullName evidence="1">Probable septum site-determining protein MinC</fullName>
    </recommendedName>
</protein>
<reference key="1">
    <citation type="journal article" date="2005" name="Proc. Natl. Acad. Sci. U.S.A.">
        <title>Complete genome sequence of Vibrio fischeri: a symbiotic bacterium with pathogenic congeners.</title>
        <authorList>
            <person name="Ruby E.G."/>
            <person name="Urbanowski M."/>
            <person name="Campbell J."/>
            <person name="Dunn A."/>
            <person name="Faini M."/>
            <person name="Gunsalus R."/>
            <person name="Lostroh P."/>
            <person name="Lupp C."/>
            <person name="McCann J."/>
            <person name="Millikan D."/>
            <person name="Schaefer A."/>
            <person name="Stabb E."/>
            <person name="Stevens A."/>
            <person name="Visick K."/>
            <person name="Whistler C."/>
            <person name="Greenberg E.P."/>
        </authorList>
    </citation>
    <scope>NUCLEOTIDE SEQUENCE [LARGE SCALE GENOMIC DNA]</scope>
    <source>
        <strain>ATCC 700601 / ES114</strain>
    </source>
</reference>
<accession>Q5E447</accession>
<feature type="chain" id="PRO_1000047872" description="Probable septum site-determining protein MinC">
    <location>
        <begin position="1"/>
        <end position="221"/>
    </location>
</feature>
<name>MINC_ALIF1</name>
<gene>
    <name evidence="1" type="primary">minC</name>
    <name type="ordered locus">VF_1704</name>
</gene>
<proteinExistence type="inferred from homology"/>
<sequence>MTKTADLKGSNFTLSVLHLPNDDVALALSMLEQKVAQAPSFFASAPVVVNIENVSNEINFVELKSGVERTGMIPVGITGCKDKQKQAQATAAGFAVMTSFTPQQVTQKANMQPTKVVKTPIRSGQQIYAKDADLVILNHVSPGAEVIADGSIHIHGTLRGRAIAGASGQAEAKVFCKNLQAELISIAGNYWLSDQIDKEYWHQNVMITMVEDRIQIDTLTL</sequence>
<keyword id="KW-0131">Cell cycle</keyword>
<keyword id="KW-0132">Cell division</keyword>
<keyword id="KW-1185">Reference proteome</keyword>
<keyword id="KW-0717">Septation</keyword>
<organism>
    <name type="scientific">Aliivibrio fischeri (strain ATCC 700601 / ES114)</name>
    <name type="common">Vibrio fischeri</name>
    <dbReference type="NCBI Taxonomy" id="312309"/>
    <lineage>
        <taxon>Bacteria</taxon>
        <taxon>Pseudomonadati</taxon>
        <taxon>Pseudomonadota</taxon>
        <taxon>Gammaproteobacteria</taxon>
        <taxon>Vibrionales</taxon>
        <taxon>Vibrionaceae</taxon>
        <taxon>Aliivibrio</taxon>
    </lineage>
</organism>
<comment type="function">
    <text evidence="1">Cell division inhibitor that blocks the formation of polar Z ring septums. Rapidly oscillates between the poles of the cell to destabilize FtsZ filaments that have formed before they mature into polar Z rings. Prevents FtsZ polymerization.</text>
</comment>
<comment type="subunit">
    <text evidence="1">Interacts with MinD and FtsZ.</text>
</comment>
<comment type="similarity">
    <text evidence="1">Belongs to the MinC family.</text>
</comment>
<evidence type="ECO:0000255" key="1">
    <source>
        <dbReference type="HAMAP-Rule" id="MF_00267"/>
    </source>
</evidence>